<sequence>MDVSRRQFFKICAGGMAGTTVAALGFAPKQALAQARNYKLLRAKEIRNTCTYCSVGCGLLMYSLGDGAKNAREAIYHIEGDPDHPVSRGALCPKGAGLLDYVNSENRLRYPEYRAPGSDKWQRISWEEAFSRIAKLMKADRDANFIEKNEQGVTVNRWLSTGMLCASGASNETGMLTQKFARSLGMLAVDNQARVUHGPTVASLAPTFGRGAMTNHWVDIKNANVVMVMGGNAAEAHPVGFRWAMEAKNNNDATLIVVDPRFTRTASVADIYAPIRSGTDITFLSGVLRYLIENNKINAEYVKHYTNASLLVRDDFAFEDGLFSGYDAEKRQYDKSSWNYQLDENGYAKRDETLTHPRCVWNLLKEHVSRYTPDVVENICGTPKADFLKVCEVLASTSAPDRTTTFLYALGWTQHTVGAQNIRTMAMIQLLLGNMGMAGGGVNALRGHSNIQGLTDLGLLSTSLPGYLTLPSEKQVDLQSYLEANTPKATLADQVNYWSNYPKFFVSLMKSFYGDAAQKENNWGYDWLPKWDQTYDVIKYFNMMDEGKVTGYFCQGFNPVASFPDKNKVVSCLSKLKYMVVIDPLVTETSTFWQNHGESNDVDPASIQTEVFRLPSTCFAEEDGSIANSGRWLQWHWKGQDAPGEARNDGEILAGIYHHLRELYQSEGGKGVEPLMKMSWNYKQPHEPQSDEVAKENNGYALEDLYDANGVLIAKKGQLLSSFAHLRDDGTTASSCWIYTGSWTEQGNQMANRDNSDPSGLGNTLGWAWAWPLNRRVLYNRASADINGKPWDPKRMLIQWNGSKWTGNDIPDFGNAAPGTPTGPFIMQPEGMGRLFAINKMAEGPFPEHYEPIETPLGTNPLHPNVVSNPVVRLYEQDALRMGKKEQFPYVGTTYRLTEHFHTWTKHALLNAIAQPEQFVEISETLAAAKGINNGDRVTVSSKRGFIRAVAVVTRRLKPLNVNGQQVETVGIPIHWGFEGVARKGYIANTLTPNVGDANSQTPEYKAFLVNIEKA</sequence>
<reference key="1">
    <citation type="journal article" date="1991" name="J. Biol. Chem.">
        <title>Nitrate-inducible formate dehydrogenase in Escherichia coli K-12. I. Nucleotide sequence of the fdnGHI operon and evidence that opal (UGA) encodes selenocysteine.</title>
        <authorList>
            <person name="Berg B.L."/>
            <person name="Li J."/>
            <person name="Heider J."/>
            <person name="Stewart V."/>
        </authorList>
    </citation>
    <scope>NUCLEOTIDE SEQUENCE [GENOMIC DNA]</scope>
    <scope>SELENOCYSTEINE AT SEC-196</scope>
    <source>
        <strain>K12</strain>
    </source>
</reference>
<reference key="2">
    <citation type="journal article" date="1996" name="DNA Res.">
        <title>A 570-kb DNA sequence of the Escherichia coli K-12 genome corresponding to the 28.0-40.1 min region on the linkage map.</title>
        <authorList>
            <person name="Aiba H."/>
            <person name="Baba T."/>
            <person name="Fujita K."/>
            <person name="Hayashi K."/>
            <person name="Inada T."/>
            <person name="Isono K."/>
            <person name="Itoh T."/>
            <person name="Kasai H."/>
            <person name="Kashimoto K."/>
            <person name="Kimura S."/>
            <person name="Kitakawa M."/>
            <person name="Kitagawa M."/>
            <person name="Makino K."/>
            <person name="Miki T."/>
            <person name="Mizobuchi K."/>
            <person name="Mori H."/>
            <person name="Mori T."/>
            <person name="Motomura K."/>
            <person name="Nakade S."/>
            <person name="Nakamura Y."/>
            <person name="Nashimoto H."/>
            <person name="Nishio Y."/>
            <person name="Oshima T."/>
            <person name="Saito N."/>
            <person name="Sampei G."/>
            <person name="Seki Y."/>
            <person name="Sivasundaram S."/>
            <person name="Tagami H."/>
            <person name="Takeda J."/>
            <person name="Takemoto K."/>
            <person name="Takeuchi Y."/>
            <person name="Wada C."/>
            <person name="Yamamoto Y."/>
            <person name="Horiuchi T."/>
        </authorList>
    </citation>
    <scope>NUCLEOTIDE SEQUENCE [LARGE SCALE GENOMIC DNA]</scope>
    <source>
        <strain>K12 / W3110 / ATCC 27325 / DSM 5911</strain>
    </source>
</reference>
<reference key="3">
    <citation type="journal article" date="1997" name="Science">
        <title>The complete genome sequence of Escherichia coli K-12.</title>
        <authorList>
            <person name="Blattner F.R."/>
            <person name="Plunkett G. III"/>
            <person name="Bloch C.A."/>
            <person name="Perna N.T."/>
            <person name="Burland V."/>
            <person name="Riley M."/>
            <person name="Collado-Vides J."/>
            <person name="Glasner J.D."/>
            <person name="Rode C.K."/>
            <person name="Mayhew G.F."/>
            <person name="Gregor J."/>
            <person name="Davis N.W."/>
            <person name="Kirkpatrick H.A."/>
            <person name="Goeden M.A."/>
            <person name="Rose D.J."/>
            <person name="Mau B."/>
            <person name="Shao Y."/>
        </authorList>
    </citation>
    <scope>NUCLEOTIDE SEQUENCE [LARGE SCALE GENOMIC DNA]</scope>
    <source>
        <strain>K12 / MG1655 / ATCC 47076</strain>
    </source>
</reference>
<reference key="4">
    <citation type="journal article" date="2006" name="Mol. Syst. Biol.">
        <title>Highly accurate genome sequences of Escherichia coli K-12 strains MG1655 and W3110.</title>
        <authorList>
            <person name="Hayashi K."/>
            <person name="Morooka N."/>
            <person name="Yamamoto Y."/>
            <person name="Fujita K."/>
            <person name="Isono K."/>
            <person name="Choi S."/>
            <person name="Ohtsubo E."/>
            <person name="Baba T."/>
            <person name="Wanner B.L."/>
            <person name="Mori H."/>
            <person name="Horiuchi T."/>
        </authorList>
    </citation>
    <scope>NUCLEOTIDE SEQUENCE [LARGE SCALE GENOMIC DNA]</scope>
    <source>
        <strain>K12 / W3110 / ATCC 27325 / DSM 5911</strain>
    </source>
</reference>
<reference key="5">
    <citation type="journal article" date="2007" name="J. Biol. Chem.">
        <title>Export pathway selectivity of Escherichia coli twin arginine translocation signal peptides.</title>
        <authorList>
            <person name="Tullman-Ercek D."/>
            <person name="DeLisa M.P."/>
            <person name="Kawarasaki Y."/>
            <person name="Iranpour P."/>
            <person name="Ribnicky B."/>
            <person name="Palmer T."/>
            <person name="Georgiou G."/>
        </authorList>
    </citation>
    <scope>EXPORT VIA THE TAT-SYSTEM</scope>
</reference>
<reference key="6">
    <citation type="journal article" date="1990" name="Genetics">
        <title>Structural genes for nitrate-inducible formate dehydrogenase in Escherichia coli K-12.</title>
        <authorList>
            <person name="Berg B.L."/>
            <person name="Stewart V."/>
        </authorList>
    </citation>
    <scope>INDUCTION</scope>
    <source>
        <strain>K12</strain>
    </source>
</reference>
<reference key="7">
    <citation type="journal article" date="2002" name="Science">
        <title>Molecular basis of proton motive force generation: structure of formate dehydrogenase-N.</title>
        <authorList>
            <person name="Jormakka M."/>
            <person name="Tornroth S."/>
            <person name="Byrne B."/>
            <person name="Iwata S."/>
        </authorList>
    </citation>
    <scope>X-RAY CRYSTALLOGRAPHY (1.6 ANGSTROMS) IN COMPLEX WITH BETA AND GAMMA SUBUNITS; [4FE-4S] CLUSTER AND MO-BIS-MGD</scope>
    <scope>FUNCTION</scope>
    <scope>CATALYTIC ACTIVITY</scope>
    <scope>COFACTOR</scope>
    <scope>ELECTRON TRANSFER CHAIN</scope>
    <scope>SUBCELLULAR LOCATION</scope>
    <scope>SUBUNIT</scope>
</reference>
<keyword id="KW-0002">3D-structure</keyword>
<keyword id="KW-0004">4Fe-4S</keyword>
<keyword id="KW-0408">Iron</keyword>
<keyword id="KW-0411">Iron-sulfur</keyword>
<keyword id="KW-0479">Metal-binding</keyword>
<keyword id="KW-0500">Molybdenum</keyword>
<keyword id="KW-0520">NAD</keyword>
<keyword id="KW-0560">Oxidoreductase</keyword>
<keyword id="KW-0574">Periplasm</keyword>
<keyword id="KW-1185">Reference proteome</keyword>
<keyword id="KW-0712">Selenocysteine</keyword>
<keyword id="KW-0732">Signal</keyword>
<proteinExistence type="evidence at protein level"/>
<protein>
    <recommendedName>
        <fullName>Formate dehydrogenase, nitrate-inducible, major subunit</fullName>
        <ecNumber evidence="3">1.17.5.3</ecNumber>
    </recommendedName>
    <alternativeName>
        <fullName>Anaerobic formate dehydrogenase major subunit</fullName>
    </alternativeName>
    <alternativeName>
        <fullName>Formate dehydrogenase-N subunit alpha</fullName>
        <shortName>FDH-N subunit alpha</shortName>
    </alternativeName>
</protein>
<accession>P24183</accession>
<accession>P78261</accession>
<feature type="signal peptide" description="Tat-type signal" evidence="1">
    <location>
        <begin position="1"/>
        <end position="33"/>
    </location>
</feature>
<feature type="chain" id="PRO_0000063222" description="Formate dehydrogenase, nitrate-inducible, major subunit">
    <location>
        <begin position="34"/>
        <end position="1015"/>
    </location>
</feature>
<feature type="domain" description="4Fe-4S Mo/W bis-MGD-type" evidence="2">
    <location>
        <begin position="43"/>
        <end position="106"/>
    </location>
</feature>
<feature type="binding site">
    <location>
        <position position="50"/>
    </location>
    <ligand>
        <name>[4Fe-4S] cluster</name>
        <dbReference type="ChEBI" id="CHEBI:49883"/>
    </ligand>
</feature>
<feature type="binding site">
    <location>
        <position position="53"/>
    </location>
    <ligand>
        <name>[4Fe-4S] cluster</name>
        <dbReference type="ChEBI" id="CHEBI:49883"/>
    </ligand>
</feature>
<feature type="binding site">
    <location>
        <position position="57"/>
    </location>
    <ligand>
        <name>[4Fe-4S] cluster</name>
        <dbReference type="ChEBI" id="CHEBI:49883"/>
    </ligand>
</feature>
<feature type="binding site">
    <location>
        <position position="92"/>
    </location>
    <ligand>
        <name>[4Fe-4S] cluster</name>
        <dbReference type="ChEBI" id="CHEBI:49883"/>
    </ligand>
</feature>
<feature type="binding site">
    <location>
        <position position="196"/>
    </location>
    <ligand>
        <name>Mo-bis(molybdopterin guanine dinucleotide)</name>
        <dbReference type="ChEBI" id="CHEBI:60539"/>
    </ligand>
    <ligandPart>
        <name>Mo</name>
        <dbReference type="ChEBI" id="CHEBI:28685"/>
    </ligandPart>
</feature>
<feature type="non-standard amino acid" description="Selenocysteine">
    <location>
        <position position="196"/>
    </location>
</feature>
<feature type="sequence conflict" description="In Ref. 1; M75029." evidence="5" ref="1">
    <original>A</original>
    <variation>P</variation>
    <location>
        <position position="96"/>
    </location>
</feature>
<feature type="sequence conflict" description="In Ref. 1; M75029." evidence="5" ref="1">
    <original>ANTPKATL</original>
    <variation>GEHAERRRW</variation>
    <location>
        <begin position="484"/>
        <end position="491"/>
    </location>
</feature>
<feature type="sequence conflict" description="In Ref. 1; M75029." evidence="5" ref="1">
    <original>S</original>
    <variation>A</variation>
    <location>
        <position position="941"/>
    </location>
</feature>
<feature type="turn" evidence="6">
    <location>
        <begin position="39"/>
        <end position="42"/>
    </location>
</feature>
<feature type="strand" evidence="6">
    <location>
        <begin position="43"/>
        <end position="49"/>
    </location>
</feature>
<feature type="strand" evidence="6">
    <location>
        <begin position="51"/>
        <end position="53"/>
    </location>
</feature>
<feature type="strand" evidence="6">
    <location>
        <begin position="58"/>
        <end position="65"/>
    </location>
</feature>
<feature type="strand" evidence="6">
    <location>
        <begin position="74"/>
        <end position="80"/>
    </location>
</feature>
<feature type="turn" evidence="6">
    <location>
        <begin position="85"/>
        <end position="89"/>
    </location>
</feature>
<feature type="helix" evidence="6">
    <location>
        <begin position="93"/>
        <end position="96"/>
    </location>
</feature>
<feature type="helix" evidence="6">
    <location>
        <begin position="99"/>
        <end position="102"/>
    </location>
</feature>
<feature type="strand" evidence="6">
    <location>
        <begin position="112"/>
        <end position="114"/>
    </location>
</feature>
<feature type="helix" evidence="6">
    <location>
        <begin position="126"/>
        <end position="144"/>
    </location>
</feature>
<feature type="strand" evidence="6">
    <location>
        <begin position="146"/>
        <end position="148"/>
    </location>
</feature>
<feature type="strand" evidence="6">
    <location>
        <begin position="154"/>
        <end position="158"/>
    </location>
</feature>
<feature type="strand" evidence="6">
    <location>
        <begin position="160"/>
        <end position="164"/>
    </location>
</feature>
<feature type="helix" evidence="6">
    <location>
        <begin position="171"/>
        <end position="183"/>
    </location>
</feature>
<feature type="strand" evidence="7">
    <location>
        <begin position="189"/>
        <end position="191"/>
    </location>
</feature>
<feature type="helix" evidence="6">
    <location>
        <begin position="192"/>
        <end position="195"/>
    </location>
</feature>
<feature type="helix" evidence="6">
    <location>
        <begin position="198"/>
        <end position="208"/>
    </location>
</feature>
<feature type="helix" evidence="6">
    <location>
        <begin position="218"/>
        <end position="222"/>
    </location>
</feature>
<feature type="strand" evidence="6">
    <location>
        <begin position="224"/>
        <end position="230"/>
    </location>
</feature>
<feature type="helix" evidence="6">
    <location>
        <begin position="233"/>
        <end position="236"/>
    </location>
</feature>
<feature type="turn" evidence="6">
    <location>
        <begin position="238"/>
        <end position="241"/>
    </location>
</feature>
<feature type="helix" evidence="6">
    <location>
        <begin position="242"/>
        <end position="250"/>
    </location>
</feature>
<feature type="strand" evidence="6">
    <location>
        <begin position="254"/>
        <end position="258"/>
    </location>
</feature>
<feature type="helix" evidence="6">
    <location>
        <begin position="264"/>
        <end position="267"/>
    </location>
</feature>
<feature type="strand" evidence="6">
    <location>
        <begin position="270"/>
        <end position="273"/>
    </location>
</feature>
<feature type="helix" evidence="6">
    <location>
        <begin position="280"/>
        <end position="293"/>
    </location>
</feature>
<feature type="helix" evidence="6">
    <location>
        <begin position="299"/>
        <end position="305"/>
    </location>
</feature>
<feature type="strand" evidence="6">
    <location>
        <begin position="310"/>
        <end position="312"/>
    </location>
</feature>
<feature type="turn" evidence="6">
    <location>
        <begin position="328"/>
        <end position="331"/>
    </location>
</feature>
<feature type="strand" evidence="6">
    <location>
        <begin position="338"/>
        <end position="340"/>
    </location>
</feature>
<feature type="strand" evidence="6">
    <location>
        <begin position="346"/>
        <end position="348"/>
    </location>
</feature>
<feature type="helix" evidence="6">
    <location>
        <begin position="360"/>
        <end position="368"/>
    </location>
</feature>
<feature type="helix" evidence="6">
    <location>
        <begin position="373"/>
        <end position="380"/>
    </location>
</feature>
<feature type="helix" evidence="6">
    <location>
        <begin position="384"/>
        <end position="395"/>
    </location>
</feature>
<feature type="helix" evidence="6">
    <location>
        <begin position="396"/>
        <end position="398"/>
    </location>
</feature>
<feature type="strand" evidence="6">
    <location>
        <begin position="404"/>
        <end position="409"/>
    </location>
</feature>
<feature type="helix" evidence="6">
    <location>
        <begin position="410"/>
        <end position="413"/>
    </location>
</feature>
<feature type="helix" evidence="6">
    <location>
        <begin position="418"/>
        <end position="431"/>
    </location>
</feature>
<feature type="strand" evidence="6">
    <location>
        <begin position="441"/>
        <end position="444"/>
    </location>
</feature>
<feature type="helix" evidence="6">
    <location>
        <begin position="451"/>
        <end position="456"/>
    </location>
</feature>
<feature type="helix" evidence="6">
    <location>
        <begin position="465"/>
        <end position="467"/>
    </location>
</feature>
<feature type="helix" evidence="6">
    <location>
        <begin position="478"/>
        <end position="485"/>
    </location>
</feature>
<feature type="strand" evidence="6">
    <location>
        <begin position="490"/>
        <end position="493"/>
    </location>
</feature>
<feature type="helix" evidence="6">
    <location>
        <begin position="497"/>
        <end position="500"/>
    </location>
</feature>
<feature type="helix" evidence="6">
    <location>
        <begin position="501"/>
        <end position="513"/>
    </location>
</feature>
<feature type="helix" evidence="6">
    <location>
        <begin position="514"/>
        <end position="516"/>
    </location>
</feature>
<feature type="helix" evidence="6">
    <location>
        <begin position="519"/>
        <end position="527"/>
    </location>
</feature>
<feature type="strand" evidence="6">
    <location>
        <begin position="531"/>
        <end position="533"/>
    </location>
</feature>
<feature type="helix" evidence="6">
    <location>
        <begin position="537"/>
        <end position="545"/>
    </location>
</feature>
<feature type="strand" evidence="6">
    <location>
        <begin position="551"/>
        <end position="556"/>
    </location>
</feature>
<feature type="helix" evidence="6">
    <location>
        <begin position="559"/>
        <end position="562"/>
    </location>
</feature>
<feature type="strand" evidence="6">
    <location>
        <begin position="563"/>
        <end position="565"/>
    </location>
</feature>
<feature type="helix" evidence="6">
    <location>
        <begin position="566"/>
        <end position="573"/>
    </location>
</feature>
<feature type="strand" evidence="6">
    <location>
        <begin position="577"/>
        <end position="585"/>
    </location>
</feature>
<feature type="turn" evidence="6">
    <location>
        <begin position="588"/>
        <end position="593"/>
    </location>
</feature>
<feature type="helix" evidence="6">
    <location>
        <begin position="597"/>
        <end position="600"/>
    </location>
</feature>
<feature type="helix" evidence="6">
    <location>
        <begin position="604"/>
        <end position="606"/>
    </location>
</feature>
<feature type="strand" evidence="6">
    <location>
        <begin position="610"/>
        <end position="616"/>
    </location>
</feature>
<feature type="helix" evidence="6">
    <location>
        <begin position="619"/>
        <end position="621"/>
    </location>
</feature>
<feature type="strand" evidence="6">
    <location>
        <begin position="624"/>
        <end position="627"/>
    </location>
</feature>
<feature type="strand" evidence="6">
    <location>
        <begin position="632"/>
        <end position="636"/>
    </location>
</feature>
<feature type="helix" evidence="6">
    <location>
        <begin position="649"/>
        <end position="667"/>
    </location>
</feature>
<feature type="helix" evidence="6">
    <location>
        <begin position="672"/>
        <end position="677"/>
    </location>
</feature>
<feature type="helix" evidence="6">
    <location>
        <begin position="690"/>
        <end position="698"/>
    </location>
</feature>
<feature type="strand" evidence="6">
    <location>
        <begin position="700"/>
        <end position="703"/>
    </location>
</feature>
<feature type="strand" evidence="6">
    <location>
        <begin position="712"/>
        <end position="714"/>
    </location>
</feature>
<feature type="helix" evidence="6">
    <location>
        <begin position="723"/>
        <end position="725"/>
    </location>
</feature>
<feature type="strand" evidence="6">
    <location>
        <begin position="728"/>
        <end position="733"/>
    </location>
</feature>
<feature type="helix" evidence="6">
    <location>
        <begin position="737"/>
        <end position="739"/>
    </location>
</feature>
<feature type="strand" evidence="6">
    <location>
        <begin position="742"/>
        <end position="744"/>
    </location>
</feature>
<feature type="helix" evidence="6">
    <location>
        <begin position="749"/>
        <end position="751"/>
    </location>
</feature>
<feature type="strand" evidence="6">
    <location>
        <begin position="760"/>
        <end position="762"/>
    </location>
</feature>
<feature type="strand" evidence="6">
    <location>
        <begin position="767"/>
        <end position="770"/>
    </location>
</feature>
<feature type="turn" evidence="6">
    <location>
        <begin position="771"/>
        <end position="774"/>
    </location>
</feature>
<feature type="helix" evidence="6">
    <location>
        <begin position="780"/>
        <end position="783"/>
    </location>
</feature>
<feature type="strand" evidence="6">
    <location>
        <begin position="790"/>
        <end position="792"/>
    </location>
</feature>
<feature type="helix" evidence="7">
    <location>
        <begin position="793"/>
        <end position="795"/>
    </location>
</feature>
<feature type="strand" evidence="6">
    <location>
        <begin position="798"/>
        <end position="800"/>
    </location>
</feature>
<feature type="strand" evidence="6">
    <location>
        <begin position="802"/>
        <end position="809"/>
    </location>
</feature>
<feature type="strand" evidence="6">
    <location>
        <begin position="831"/>
        <end position="833"/>
    </location>
</feature>
<feature type="strand" evidence="6">
    <location>
        <begin position="856"/>
        <end position="859"/>
    </location>
</feature>
<feature type="helix" evidence="6">
    <location>
        <begin position="876"/>
        <end position="879"/>
    </location>
</feature>
<feature type="turn" evidence="6">
    <location>
        <begin position="885"/>
        <end position="887"/>
    </location>
</feature>
<feature type="strand" evidence="6">
    <location>
        <begin position="890"/>
        <end position="895"/>
    </location>
</feature>
<feature type="turn" evidence="6">
    <location>
        <begin position="902"/>
        <end position="904"/>
    </location>
</feature>
<feature type="helix" evidence="6">
    <location>
        <begin position="905"/>
        <end position="907"/>
    </location>
</feature>
<feature type="helix" evidence="6">
    <location>
        <begin position="909"/>
        <end position="914"/>
    </location>
</feature>
<feature type="strand" evidence="6">
    <location>
        <begin position="919"/>
        <end position="922"/>
    </location>
</feature>
<feature type="helix" evidence="6">
    <location>
        <begin position="924"/>
        <end position="930"/>
    </location>
</feature>
<feature type="strand" evidence="6">
    <location>
        <begin position="937"/>
        <end position="941"/>
    </location>
</feature>
<feature type="strand" evidence="6">
    <location>
        <begin position="946"/>
        <end position="953"/>
    </location>
</feature>
<feature type="strand" evidence="6">
    <location>
        <begin position="960"/>
        <end position="962"/>
    </location>
</feature>
<feature type="strand" evidence="6">
    <location>
        <begin position="965"/>
        <end position="967"/>
    </location>
</feature>
<feature type="strand" evidence="6">
    <location>
        <begin position="969"/>
        <end position="973"/>
    </location>
</feature>
<feature type="strand" evidence="6">
    <location>
        <begin position="978"/>
        <end position="982"/>
    </location>
</feature>
<feature type="helix" evidence="6">
    <location>
        <begin position="988"/>
        <end position="990"/>
    </location>
</feature>
<feature type="turn" evidence="6">
    <location>
        <begin position="998"/>
        <end position="1000"/>
    </location>
</feature>
<feature type="strand" evidence="6">
    <location>
        <begin position="1007"/>
        <end position="1014"/>
    </location>
</feature>
<gene>
    <name type="primary">fdnG</name>
    <name type="ordered locus">b1474</name>
    <name type="ordered locus">JW1470</name>
</gene>
<evidence type="ECO:0000255" key="1">
    <source>
        <dbReference type="PROSITE-ProRule" id="PRU00648"/>
    </source>
</evidence>
<evidence type="ECO:0000255" key="2">
    <source>
        <dbReference type="PROSITE-ProRule" id="PRU01004"/>
    </source>
</evidence>
<evidence type="ECO:0000269" key="3">
    <source>
    </source>
</evidence>
<evidence type="ECO:0000269" key="4">
    <source>
    </source>
</evidence>
<evidence type="ECO:0000305" key="5"/>
<evidence type="ECO:0007829" key="6">
    <source>
        <dbReference type="PDB" id="1KQF"/>
    </source>
</evidence>
<evidence type="ECO:0007829" key="7">
    <source>
        <dbReference type="PDB" id="1KQG"/>
    </source>
</evidence>
<dbReference type="EC" id="1.17.5.3" evidence="3"/>
<dbReference type="EMBL" id="M75029">
    <property type="status" value="NOT_ANNOTATED_CDS"/>
    <property type="molecule type" value="Genomic_DNA"/>
</dbReference>
<dbReference type="EMBL" id="U00096">
    <property type="protein sequence ID" value="AAD13438.1"/>
    <property type="molecule type" value="Genomic_DNA"/>
</dbReference>
<dbReference type="EMBL" id="AP009048">
    <property type="protein sequence ID" value="BAA15123.2"/>
    <property type="molecule type" value="Genomic_DNA"/>
</dbReference>
<dbReference type="PIR" id="E64900">
    <property type="entry name" value="JS0628"/>
</dbReference>
<dbReference type="RefSeq" id="NP_415991.1">
    <property type="nucleotide sequence ID" value="NC_000913.3"/>
</dbReference>
<dbReference type="RefSeq" id="WP_010723100.1">
    <property type="nucleotide sequence ID" value="NZ_LN832404.1"/>
</dbReference>
<dbReference type="PDB" id="1KQF">
    <property type="method" value="X-ray"/>
    <property type="resolution" value="1.60 A"/>
    <property type="chains" value="A=1-1015"/>
</dbReference>
<dbReference type="PDB" id="1KQG">
    <property type="method" value="X-ray"/>
    <property type="resolution" value="2.80 A"/>
    <property type="chains" value="A=1-1015"/>
</dbReference>
<dbReference type="PDBsum" id="1KQF"/>
<dbReference type="PDBsum" id="1KQG"/>
<dbReference type="SMR" id="P24183"/>
<dbReference type="BioGRID" id="4262900">
    <property type="interactions" value="43"/>
</dbReference>
<dbReference type="BioGRID" id="850396">
    <property type="interactions" value="1"/>
</dbReference>
<dbReference type="ComplexPortal" id="CPX-1975">
    <property type="entry name" value="Formate dehydrogenase N complex"/>
</dbReference>
<dbReference type="DIP" id="DIP-9573N"/>
<dbReference type="FunCoup" id="P24183">
    <property type="interactions" value="352"/>
</dbReference>
<dbReference type="IntAct" id="P24183">
    <property type="interactions" value="15"/>
</dbReference>
<dbReference type="STRING" id="511145.b1474"/>
<dbReference type="DrugBank" id="DB07918">
    <property type="generic name" value="2-heptyl-4-hydroxyquinoline N-oxide"/>
</dbReference>
<dbReference type="TCDB" id="5.A.3.2.1">
    <property type="family name" value="the prokaryotic molybdopterin-containing oxidoreductase (pmo) family"/>
</dbReference>
<dbReference type="jPOST" id="P24183"/>
<dbReference type="PaxDb" id="511145-b1474"/>
<dbReference type="GeneID" id="946035"/>
<dbReference type="KEGG" id="ecj:JW1470"/>
<dbReference type="KEGG" id="eco:b1474"/>
<dbReference type="PATRIC" id="fig|511145.12.peg.1540"/>
<dbReference type="EchoBASE" id="EB1209"/>
<dbReference type="eggNOG" id="COG0243">
    <property type="taxonomic scope" value="Bacteria"/>
</dbReference>
<dbReference type="eggNOG" id="COG3383">
    <property type="taxonomic scope" value="Bacteria"/>
</dbReference>
<dbReference type="InParanoid" id="P24183"/>
<dbReference type="OMA" id="SELWFFY"/>
<dbReference type="OrthoDB" id="9810782at2"/>
<dbReference type="PhylomeDB" id="P24183"/>
<dbReference type="BioCyc" id="EcoCyc:FDNG-MONOMER"/>
<dbReference type="BioCyc" id="MetaCyc:FDNG-MONOMER"/>
<dbReference type="BRENDA" id="1.17.5.3">
    <property type="organism ID" value="2026"/>
</dbReference>
<dbReference type="EvolutionaryTrace" id="P24183"/>
<dbReference type="PHI-base" id="PHI:10997"/>
<dbReference type="PRO" id="PR:P24183"/>
<dbReference type="Proteomes" id="UP000000625">
    <property type="component" value="Chromosome"/>
</dbReference>
<dbReference type="GO" id="GO:0009326">
    <property type="term" value="C:formate dehydrogenase complex"/>
    <property type="evidence" value="ECO:0000314"/>
    <property type="project" value="EcoCyc"/>
</dbReference>
<dbReference type="GO" id="GO:0016020">
    <property type="term" value="C:membrane"/>
    <property type="evidence" value="ECO:0000314"/>
    <property type="project" value="ComplexPortal"/>
</dbReference>
<dbReference type="GO" id="GO:0030288">
    <property type="term" value="C:outer membrane-bounded periplasmic space"/>
    <property type="evidence" value="ECO:0000314"/>
    <property type="project" value="EcoCyc"/>
</dbReference>
<dbReference type="GO" id="GO:0051539">
    <property type="term" value="F:4 iron, 4 sulfur cluster binding"/>
    <property type="evidence" value="ECO:0000314"/>
    <property type="project" value="EcoCyc"/>
</dbReference>
<dbReference type="GO" id="GO:0009055">
    <property type="term" value="F:electron transfer activity"/>
    <property type="evidence" value="ECO:0000314"/>
    <property type="project" value="EcoCyc"/>
</dbReference>
<dbReference type="GO" id="GO:0047111">
    <property type="term" value="F:formate dehydrogenase (cytochrome-c-553) activity"/>
    <property type="evidence" value="ECO:0007669"/>
    <property type="project" value="InterPro"/>
</dbReference>
<dbReference type="GO" id="GO:0008863">
    <property type="term" value="F:formate dehydrogenase (NAD+) activity"/>
    <property type="evidence" value="ECO:0007669"/>
    <property type="project" value="InterPro"/>
</dbReference>
<dbReference type="GO" id="GO:0036397">
    <property type="term" value="F:formate dehydrogenase (quinone) activity"/>
    <property type="evidence" value="ECO:0000314"/>
    <property type="project" value="EcoCyc"/>
</dbReference>
<dbReference type="GO" id="GO:0030151">
    <property type="term" value="F:molybdenum ion binding"/>
    <property type="evidence" value="ECO:0000314"/>
    <property type="project" value="EcoCyc"/>
</dbReference>
<dbReference type="GO" id="GO:0043546">
    <property type="term" value="F:molybdopterin cofactor binding"/>
    <property type="evidence" value="ECO:0007669"/>
    <property type="project" value="InterPro"/>
</dbReference>
<dbReference type="GO" id="GO:0008430">
    <property type="term" value="F:selenium binding"/>
    <property type="evidence" value="ECO:0000314"/>
    <property type="project" value="EcoCyc"/>
</dbReference>
<dbReference type="GO" id="GO:0019645">
    <property type="term" value="P:anaerobic electron transport chain"/>
    <property type="evidence" value="ECO:0000303"/>
    <property type="project" value="ComplexPortal"/>
</dbReference>
<dbReference type="GO" id="GO:0009061">
    <property type="term" value="P:anaerobic respiration"/>
    <property type="evidence" value="ECO:0000270"/>
    <property type="project" value="EcoCyc"/>
</dbReference>
<dbReference type="GO" id="GO:0015944">
    <property type="term" value="P:formate oxidation"/>
    <property type="evidence" value="ECO:0000314"/>
    <property type="project" value="EcoCyc"/>
</dbReference>
<dbReference type="GO" id="GO:0006788">
    <property type="term" value="P:heme oxidation"/>
    <property type="evidence" value="ECO:0000303"/>
    <property type="project" value="ComplexPortal"/>
</dbReference>
<dbReference type="CDD" id="cd02792">
    <property type="entry name" value="MopB_CT_Formate-Dh-Na-like"/>
    <property type="match status" value="1"/>
</dbReference>
<dbReference type="CDD" id="cd02752">
    <property type="entry name" value="MopB_Formate-Dh-Na-like"/>
    <property type="match status" value="1"/>
</dbReference>
<dbReference type="FunFam" id="2.40.40.20:FF:000017">
    <property type="entry name" value="Formate dehydrogenase, alpha subunit"/>
    <property type="match status" value="1"/>
</dbReference>
<dbReference type="FunFam" id="3.40.228.10:FF:000006">
    <property type="entry name" value="Formate dehydrogenase, alpha subunit, selenocysteine-containing"/>
    <property type="match status" value="1"/>
</dbReference>
<dbReference type="FunFam" id="3.40.50.740:FF:000007">
    <property type="entry name" value="Formate dehydrogenase, alpha subunit, selenocysteine-containing"/>
    <property type="match status" value="1"/>
</dbReference>
<dbReference type="FunFam" id="3.30.200.210:FF:000003">
    <property type="entry name" value="Formate dehydrogenase-N subunit alpha"/>
    <property type="match status" value="1"/>
</dbReference>
<dbReference type="FunFam" id="3.40.228.10:FF:000011">
    <property type="entry name" value="Formate dehydrogenase-N subunit alpha"/>
    <property type="match status" value="1"/>
</dbReference>
<dbReference type="Gene3D" id="2.40.40.20">
    <property type="match status" value="1"/>
</dbReference>
<dbReference type="Gene3D" id="3.30.200.210">
    <property type="match status" value="1"/>
</dbReference>
<dbReference type="Gene3D" id="3.40.50.740">
    <property type="match status" value="1"/>
</dbReference>
<dbReference type="Gene3D" id="3.40.228.10">
    <property type="entry name" value="Dimethylsulfoxide Reductase, domain 2"/>
    <property type="match status" value="1"/>
</dbReference>
<dbReference type="InterPro" id="IPR009010">
    <property type="entry name" value="Asp_de-COase-like_dom_sf"/>
</dbReference>
<dbReference type="InterPro" id="IPR006443">
    <property type="entry name" value="Formate-DH-alph_fdnG"/>
</dbReference>
<dbReference type="InterPro" id="IPR006657">
    <property type="entry name" value="MoPterin_dinucl-bd_dom"/>
</dbReference>
<dbReference type="InterPro" id="IPR006656">
    <property type="entry name" value="Mopterin_OxRdtase"/>
</dbReference>
<dbReference type="InterPro" id="IPR006963">
    <property type="entry name" value="Mopterin_OxRdtase_4Fe-4S_dom"/>
</dbReference>
<dbReference type="InterPro" id="IPR006655">
    <property type="entry name" value="Mopterin_OxRdtase_prok_CS"/>
</dbReference>
<dbReference type="InterPro" id="IPR027467">
    <property type="entry name" value="MopterinOxRdtase_cofactor_BS"/>
</dbReference>
<dbReference type="InterPro" id="IPR006311">
    <property type="entry name" value="TAT_signal"/>
</dbReference>
<dbReference type="NCBIfam" id="TIGR01553">
    <property type="entry name" value="formate-DH-alph"/>
    <property type="match status" value="1"/>
</dbReference>
<dbReference type="PANTHER" id="PTHR43598:SF7">
    <property type="entry name" value="FORMATE DEHYDROGENASE, NITRATE-INDUCIBLE, MAJOR SUBUNIT"/>
    <property type="match status" value="1"/>
</dbReference>
<dbReference type="PANTHER" id="PTHR43598">
    <property type="entry name" value="TUNGSTEN-CONTAINING FORMYLMETHANOFURAN DEHYDROGENASE 2 SUBUNIT B"/>
    <property type="match status" value="1"/>
</dbReference>
<dbReference type="Pfam" id="PF04879">
    <property type="entry name" value="Molybdop_Fe4S4"/>
    <property type="match status" value="1"/>
</dbReference>
<dbReference type="Pfam" id="PF00384">
    <property type="entry name" value="Molybdopterin"/>
    <property type="match status" value="1"/>
</dbReference>
<dbReference type="Pfam" id="PF01568">
    <property type="entry name" value="Molydop_binding"/>
    <property type="match status" value="1"/>
</dbReference>
<dbReference type="SMART" id="SM00926">
    <property type="entry name" value="Molybdop_Fe4S4"/>
    <property type="match status" value="1"/>
</dbReference>
<dbReference type="SUPFAM" id="SSF50692">
    <property type="entry name" value="ADC-like"/>
    <property type="match status" value="1"/>
</dbReference>
<dbReference type="SUPFAM" id="SSF53706">
    <property type="entry name" value="Formate dehydrogenase/DMSO reductase, domains 1-3"/>
    <property type="match status" value="1"/>
</dbReference>
<dbReference type="PROSITE" id="PS51669">
    <property type="entry name" value="4FE4S_MOW_BIS_MGD"/>
    <property type="match status" value="1"/>
</dbReference>
<dbReference type="PROSITE" id="PS00551">
    <property type="entry name" value="MOLYBDOPTERIN_PROK_1"/>
    <property type="match status" value="1"/>
</dbReference>
<dbReference type="PROSITE" id="PS00932">
    <property type="entry name" value="MOLYBDOPTERIN_PROK_3"/>
    <property type="match status" value="1"/>
</dbReference>
<dbReference type="PROSITE" id="PS51318">
    <property type="entry name" value="TAT"/>
    <property type="match status" value="1"/>
</dbReference>
<name>FDNG_ECOLI</name>
<organism>
    <name type="scientific">Escherichia coli (strain K12)</name>
    <dbReference type="NCBI Taxonomy" id="83333"/>
    <lineage>
        <taxon>Bacteria</taxon>
        <taxon>Pseudomonadati</taxon>
        <taxon>Pseudomonadota</taxon>
        <taxon>Gammaproteobacteria</taxon>
        <taxon>Enterobacterales</taxon>
        <taxon>Enterobacteriaceae</taxon>
        <taxon>Escherichia</taxon>
    </lineage>
</organism>
<comment type="function">
    <text evidence="3">Formate dehydrogenase allows E.coli to use formate as major electron donor during anaerobic respiration, when nitrate is used as electron acceptor. The alpha subunit FdnG contains the formate oxidation site. Electrons are transferred from formate to menaquinone in the gamma subunit (FdnI), through the 4Fe-4S clusters in the beta subunit (FdnH). Formate dehydrogenase-N is part of a system that generates proton motive force, together with the dissimilatory nitrate reductase (Nar).</text>
</comment>
<comment type="catalytic activity">
    <reaction evidence="3">
        <text>a quinone + formate + H(+) = a quinol + CO2</text>
        <dbReference type="Rhea" id="RHEA:48592"/>
        <dbReference type="ChEBI" id="CHEBI:15378"/>
        <dbReference type="ChEBI" id="CHEBI:15740"/>
        <dbReference type="ChEBI" id="CHEBI:16526"/>
        <dbReference type="ChEBI" id="CHEBI:24646"/>
        <dbReference type="ChEBI" id="CHEBI:132124"/>
        <dbReference type="EC" id="1.17.5.3"/>
    </reaction>
</comment>
<comment type="cofactor">
    <cofactor evidence="3">
        <name>Mo-bis(molybdopterin guanine dinucleotide)</name>
        <dbReference type="ChEBI" id="CHEBI:60539"/>
    </cofactor>
    <text evidence="3">Binds 1 molybdenum-bis(molybdopterin guanine dinucleotide) (Mo-bis-MGD) cofactor per subunit.</text>
</comment>
<comment type="cofactor">
    <cofactor evidence="3">
        <name>[4Fe-4S] cluster</name>
        <dbReference type="ChEBI" id="CHEBI:49883"/>
    </cofactor>
    <text evidence="3">Binds 1 [4Fe-4S] cluster per subunit.</text>
</comment>
<comment type="subunit">
    <text evidence="3">Trimer of heterotrimers, consisting of subunits alpha, beta and gamma.</text>
</comment>
<comment type="interaction">
    <interactant intactId="EBI-550115">
        <id>P24183</id>
    </interactant>
    <interactant intactId="EBI-550129">
        <id>P13024</id>
        <label>fdhE</label>
    </interactant>
    <organismsDiffer>false</organismsDiffer>
    <experiments>6</experiments>
</comment>
<comment type="subcellular location">
    <subcellularLocation>
        <location evidence="3">Periplasm</location>
    </subcellularLocation>
</comment>
<comment type="induction">
    <text evidence="4">By nitrate under anaerobic conditions.</text>
</comment>
<comment type="PTM">
    <text>Exported by the Tat system. The position of the signal peptide cleavage has not been experimentally proven.</text>
</comment>
<comment type="similarity">
    <text evidence="5">Belongs to the prokaryotic molybdopterin-containing oxidoreductase family.</text>
</comment>